<protein>
    <recommendedName>
        <fullName>Kunitz-type kappaPI-theraphotoxin-Hs1d</fullName>
        <shortName>KappaPI-TRTX-Hs1d</shortName>
    </recommendedName>
    <alternativeName>
        <fullName evidence="6">Huwentoxin HW11c40</fullName>
    </alternativeName>
    <alternativeName>
        <fullName evidence="5">Kunitz-type serine protease inhibitor HWTX-XI-IS40</fullName>
    </alternativeName>
</protein>
<accession>P0DJ84</accession>
<accession>A0A023WAD2</accession>
<evidence type="ECO:0000250" key="1"/>
<evidence type="ECO:0000250" key="2">
    <source>
        <dbReference type="UniProtKB" id="P68425"/>
    </source>
</evidence>
<evidence type="ECO:0000255" key="3"/>
<evidence type="ECO:0000255" key="4">
    <source>
        <dbReference type="PROSITE-ProRule" id="PRU00031"/>
    </source>
</evidence>
<evidence type="ECO:0000303" key="5">
    <source>
    </source>
</evidence>
<evidence type="ECO:0000303" key="6">
    <source>
    </source>
</evidence>
<evidence type="ECO:0000305" key="7"/>
<evidence type="ECO:0000305" key="8">
    <source>
    </source>
</evidence>
<reference key="1">
    <citation type="journal article" date="2008" name="PLoS ONE">
        <title>Discovery of a distinct superfamily of Kunitz-type toxin (KTT) from tarantulas.</title>
        <authorList>
            <person name="Yuan C.-H."/>
            <person name="He Q.-Y."/>
            <person name="Peng K."/>
            <person name="Diao J.-B."/>
            <person name="Jiang L.-P."/>
            <person name="Tang X."/>
            <person name="Liang S.-P."/>
        </authorList>
    </citation>
    <scope>NUCLEOTIDE SEQUENCE [MRNA]</scope>
    <source>
        <tissue>Venom gland</tissue>
    </source>
</reference>
<reference key="2">
    <citation type="journal article" date="2014" name="Peptides">
        <title>Molecular cloning, bioinformatics analysis and functional characterization of HWTX-XI toxin superfamily from the spider Ornithoctonus huwena.</title>
        <authorList>
            <person name="Jiang L."/>
            <person name="Deng M."/>
            <person name="Duan Z."/>
            <person name="Tang X."/>
            <person name="Liang S."/>
        </authorList>
    </citation>
    <scope>NUCLEOTIDE SEQUENCE [GENOMIC DNA]</scope>
    <source>
        <tissue>Venom gland</tissue>
    </source>
</reference>
<sequence>MGIARILSAVLFLSVLFVVTFPTLLSADHHDGRIDTCRLPSDRGRCKASFERWYFNGTTCTKFVYGGYGGNDNRFPTEKACMKRCAKA</sequence>
<keyword id="KW-1015">Disulfide bond</keyword>
<keyword id="KW-0646">Protease inhibitor</keyword>
<keyword id="KW-0964">Secreted</keyword>
<keyword id="KW-0722">Serine protease inhibitor</keyword>
<keyword id="KW-0732">Signal</keyword>
<proteinExistence type="inferred from homology"/>
<name>VKT40_CYRSC</name>
<feature type="signal peptide" evidence="3">
    <location>
        <begin position="1"/>
        <end position="27"/>
    </location>
</feature>
<feature type="propeptide" id="PRO_0000413842" evidence="1">
    <location>
        <begin position="28"/>
        <end position="33"/>
    </location>
</feature>
<feature type="chain" id="PRO_0000413843" description="Kunitz-type kappaPI-theraphotoxin-Hs1d">
    <location>
        <begin position="34"/>
        <end position="88"/>
    </location>
</feature>
<feature type="domain" description="BPTI/Kunitz inhibitor" evidence="4">
    <location>
        <begin position="37"/>
        <end position="85"/>
    </location>
</feature>
<feature type="site" description="May bind Kv1.x/KCNA" evidence="1">
    <location>
        <position position="39"/>
    </location>
</feature>
<feature type="site" description="Reactive bond for trypsin" evidence="1">
    <location>
        <begin position="47"/>
        <end position="48"/>
    </location>
</feature>
<feature type="disulfide bond" evidence="4">
    <location>
        <begin position="37"/>
        <end position="85"/>
    </location>
</feature>
<feature type="disulfide bond" evidence="4">
    <location>
        <begin position="60"/>
        <end position="81"/>
    </location>
</feature>
<comment type="function">
    <text evidence="2">Serine protease inhibitor that inhibits trypsin at a molar ratio of 1:1.</text>
</comment>
<comment type="subcellular location">
    <subcellularLocation>
        <location evidence="8">Secreted</location>
    </subcellularLocation>
</comment>
<comment type="tissue specificity">
    <text evidence="8">Expressed by the venom gland.</text>
</comment>
<comment type="similarity">
    <text evidence="7">Belongs to the venom Kunitz-type family. 01 (intermediate) subfamily.</text>
</comment>
<organism>
    <name type="scientific">Cyriopagopus schmidti</name>
    <name type="common">Chinese bird spider</name>
    <name type="synonym">Haplopelma schmidti</name>
    <dbReference type="NCBI Taxonomy" id="29017"/>
    <lineage>
        <taxon>Eukaryota</taxon>
        <taxon>Metazoa</taxon>
        <taxon>Ecdysozoa</taxon>
        <taxon>Arthropoda</taxon>
        <taxon>Chelicerata</taxon>
        <taxon>Arachnida</taxon>
        <taxon>Araneae</taxon>
        <taxon>Mygalomorphae</taxon>
        <taxon>Theraphosidae</taxon>
        <taxon>Cyriopagopus</taxon>
    </lineage>
</organism>
<dbReference type="EMBL" id="KF160308">
    <property type="protein sequence ID" value="AHY30319.1"/>
    <property type="molecule type" value="Genomic_DNA"/>
</dbReference>
<dbReference type="SMR" id="P0DJ84"/>
<dbReference type="ArachnoServer" id="AS002039">
    <property type="toxin name" value="kappa-theraphotoxin-Hs1d"/>
</dbReference>
<dbReference type="GO" id="GO:0005576">
    <property type="term" value="C:extracellular region"/>
    <property type="evidence" value="ECO:0007669"/>
    <property type="project" value="UniProtKB-SubCell"/>
</dbReference>
<dbReference type="GO" id="GO:0015459">
    <property type="term" value="F:potassium channel regulator activity"/>
    <property type="evidence" value="ECO:0007669"/>
    <property type="project" value="UniProtKB-KW"/>
</dbReference>
<dbReference type="GO" id="GO:0004867">
    <property type="term" value="F:serine-type endopeptidase inhibitor activity"/>
    <property type="evidence" value="ECO:0007669"/>
    <property type="project" value="UniProtKB-KW"/>
</dbReference>
<dbReference type="GO" id="GO:0090729">
    <property type="term" value="F:toxin activity"/>
    <property type="evidence" value="ECO:0007669"/>
    <property type="project" value="UniProtKB-KW"/>
</dbReference>
<dbReference type="GO" id="GO:0044562">
    <property type="term" value="P:envenomation resulting in negative regulation of voltage-gated potassium channel activity in another organism"/>
    <property type="evidence" value="ECO:0007669"/>
    <property type="project" value="UniProtKB-ARBA"/>
</dbReference>
<dbReference type="CDD" id="cd22598">
    <property type="entry name" value="Kunitz_huwentoxin"/>
    <property type="match status" value="1"/>
</dbReference>
<dbReference type="FunFam" id="4.10.410.10:FF:000020">
    <property type="entry name" value="Collagen, type VI, alpha 3"/>
    <property type="match status" value="1"/>
</dbReference>
<dbReference type="Gene3D" id="4.10.410.10">
    <property type="entry name" value="Pancreatic trypsin inhibitor Kunitz domain"/>
    <property type="match status" value="1"/>
</dbReference>
<dbReference type="InterPro" id="IPR002223">
    <property type="entry name" value="Kunitz_BPTI"/>
</dbReference>
<dbReference type="InterPro" id="IPR036880">
    <property type="entry name" value="Kunitz_BPTI_sf"/>
</dbReference>
<dbReference type="PANTHER" id="PTHR47247">
    <property type="entry name" value="KUNITZ-TYPE PROTEASE INHIBITOR 2"/>
    <property type="match status" value="1"/>
</dbReference>
<dbReference type="PANTHER" id="PTHR47247:SF1">
    <property type="entry name" value="KUNITZ-TYPE PROTEASE INHIBITOR 2"/>
    <property type="match status" value="1"/>
</dbReference>
<dbReference type="Pfam" id="PF00014">
    <property type="entry name" value="Kunitz_BPTI"/>
    <property type="match status" value="1"/>
</dbReference>
<dbReference type="PRINTS" id="PR00759">
    <property type="entry name" value="BASICPTASE"/>
</dbReference>
<dbReference type="SMART" id="SM00131">
    <property type="entry name" value="KU"/>
    <property type="match status" value="1"/>
</dbReference>
<dbReference type="SUPFAM" id="SSF57362">
    <property type="entry name" value="BPTI-like"/>
    <property type="match status" value="1"/>
</dbReference>
<dbReference type="PROSITE" id="PS50279">
    <property type="entry name" value="BPTI_KUNITZ_2"/>
    <property type="match status" value="1"/>
</dbReference>